<reference key="1">
    <citation type="journal article" date="2008" name="BMC Genomics">
        <title>The genome of Aeromonas salmonicida subsp. salmonicida A449: insights into the evolution of a fish pathogen.</title>
        <authorList>
            <person name="Reith M.E."/>
            <person name="Singh R.K."/>
            <person name="Curtis B."/>
            <person name="Boyd J.M."/>
            <person name="Bouevitch A."/>
            <person name="Kimball J."/>
            <person name="Munholland J."/>
            <person name="Murphy C."/>
            <person name="Sarty D."/>
            <person name="Williams J."/>
            <person name="Nash J.H."/>
            <person name="Johnson S.C."/>
            <person name="Brown L.L."/>
        </authorList>
    </citation>
    <scope>NUCLEOTIDE SEQUENCE [LARGE SCALE GENOMIC DNA]</scope>
    <source>
        <strain>A449</strain>
    </source>
</reference>
<organism>
    <name type="scientific">Aeromonas salmonicida (strain A449)</name>
    <dbReference type="NCBI Taxonomy" id="382245"/>
    <lineage>
        <taxon>Bacteria</taxon>
        <taxon>Pseudomonadati</taxon>
        <taxon>Pseudomonadota</taxon>
        <taxon>Gammaproteobacteria</taxon>
        <taxon>Aeromonadales</taxon>
        <taxon>Aeromonadaceae</taxon>
        <taxon>Aeromonas</taxon>
    </lineage>
</organism>
<name>DAPE_AERS4</name>
<sequence>MSDVIALAKDLIRRPSVTPQDEGCQTLMSERLARLGFVIEPMVFEDTTNLWARRGSEGPLFCFAGHTDVVPAGPLEKWHTPPFEPTIQDGVLYGRGAADMKGSLAAMVVAVERFVAEHPDHKGSIAFLITSDEEGPFINGTVRVIDTLEARNEKIRWCIVGEPSSTHVVGDVVKNGRRGSITGDLLVRGVQGHVAYPHLADNPIHKAAPALTELAATVWDEGNAYFPPTSFQIANIQAGTGASNVIPGELQVQFNFRFSTQLTDMDIRERVQALLDKHGLDYELTWTLSGQPFLTDTGALLEATVAAVAAVNGQQPALLTTGGTSDGRFIAPTGAEVIELGPVNATIHKVNECVKAEDLDLLAEMYQGVLERLLA</sequence>
<proteinExistence type="inferred from homology"/>
<gene>
    <name evidence="1" type="primary">dapE</name>
    <name type="ordered locus">ASA_2887</name>
</gene>
<feature type="chain" id="PRO_0000375454" description="Succinyl-diaminopimelate desuccinylase">
    <location>
        <begin position="1"/>
        <end position="375"/>
    </location>
</feature>
<feature type="active site" evidence="1">
    <location>
        <position position="68"/>
    </location>
</feature>
<feature type="active site" description="Proton acceptor" evidence="1">
    <location>
        <position position="133"/>
    </location>
</feature>
<feature type="binding site" evidence="1">
    <location>
        <position position="66"/>
    </location>
    <ligand>
        <name>Zn(2+)</name>
        <dbReference type="ChEBI" id="CHEBI:29105"/>
        <label>1</label>
    </ligand>
</feature>
<feature type="binding site" evidence="1">
    <location>
        <position position="99"/>
    </location>
    <ligand>
        <name>Zn(2+)</name>
        <dbReference type="ChEBI" id="CHEBI:29105"/>
        <label>1</label>
    </ligand>
</feature>
<feature type="binding site" evidence="1">
    <location>
        <position position="99"/>
    </location>
    <ligand>
        <name>Zn(2+)</name>
        <dbReference type="ChEBI" id="CHEBI:29105"/>
        <label>2</label>
    </ligand>
</feature>
<feature type="binding site" evidence="1">
    <location>
        <position position="134"/>
    </location>
    <ligand>
        <name>Zn(2+)</name>
        <dbReference type="ChEBI" id="CHEBI:29105"/>
        <label>2</label>
    </ligand>
</feature>
<feature type="binding site" evidence="1">
    <location>
        <position position="162"/>
    </location>
    <ligand>
        <name>Zn(2+)</name>
        <dbReference type="ChEBI" id="CHEBI:29105"/>
        <label>1</label>
    </ligand>
</feature>
<feature type="binding site" evidence="1">
    <location>
        <position position="348"/>
    </location>
    <ligand>
        <name>Zn(2+)</name>
        <dbReference type="ChEBI" id="CHEBI:29105"/>
        <label>2</label>
    </ligand>
</feature>
<protein>
    <recommendedName>
        <fullName evidence="1">Succinyl-diaminopimelate desuccinylase</fullName>
        <shortName evidence="1">SDAP desuccinylase</shortName>
        <ecNumber evidence="1">3.5.1.18</ecNumber>
    </recommendedName>
    <alternativeName>
        <fullName evidence="1">N-succinyl-LL-2,6-diaminoheptanedioate amidohydrolase</fullName>
    </alternativeName>
</protein>
<comment type="function">
    <text evidence="1">Catalyzes the hydrolysis of N-succinyl-L,L-diaminopimelic acid (SDAP), forming succinate and LL-2,6-diaminopimelate (DAP), an intermediate involved in the bacterial biosynthesis of lysine and meso-diaminopimelic acid, an essential component of bacterial cell walls.</text>
</comment>
<comment type="catalytic activity">
    <reaction evidence="1">
        <text>N-succinyl-(2S,6S)-2,6-diaminopimelate + H2O = (2S,6S)-2,6-diaminopimelate + succinate</text>
        <dbReference type="Rhea" id="RHEA:22608"/>
        <dbReference type="ChEBI" id="CHEBI:15377"/>
        <dbReference type="ChEBI" id="CHEBI:30031"/>
        <dbReference type="ChEBI" id="CHEBI:57609"/>
        <dbReference type="ChEBI" id="CHEBI:58087"/>
        <dbReference type="EC" id="3.5.1.18"/>
    </reaction>
</comment>
<comment type="cofactor">
    <cofactor evidence="1">
        <name>Zn(2+)</name>
        <dbReference type="ChEBI" id="CHEBI:29105"/>
    </cofactor>
    <cofactor evidence="1">
        <name>Co(2+)</name>
        <dbReference type="ChEBI" id="CHEBI:48828"/>
    </cofactor>
    <text evidence="1">Binds 2 Zn(2+) or Co(2+) ions per subunit.</text>
</comment>
<comment type="pathway">
    <text evidence="1">Amino-acid biosynthesis; L-lysine biosynthesis via DAP pathway; LL-2,6-diaminopimelate from (S)-tetrahydrodipicolinate (succinylase route): step 3/3.</text>
</comment>
<comment type="subunit">
    <text evidence="1">Homodimer.</text>
</comment>
<comment type="similarity">
    <text evidence="1">Belongs to the peptidase M20A family. DapE subfamily.</text>
</comment>
<keyword id="KW-0028">Amino-acid biosynthesis</keyword>
<keyword id="KW-0170">Cobalt</keyword>
<keyword id="KW-0220">Diaminopimelate biosynthesis</keyword>
<keyword id="KW-0378">Hydrolase</keyword>
<keyword id="KW-0457">Lysine biosynthesis</keyword>
<keyword id="KW-0479">Metal-binding</keyword>
<keyword id="KW-0862">Zinc</keyword>
<dbReference type="EC" id="3.5.1.18" evidence="1"/>
<dbReference type="EMBL" id="CP000644">
    <property type="protein sequence ID" value="ABO90899.1"/>
    <property type="molecule type" value="Genomic_DNA"/>
</dbReference>
<dbReference type="RefSeq" id="WP_005312969.1">
    <property type="nucleotide sequence ID" value="NC_009348.1"/>
</dbReference>
<dbReference type="SMR" id="A4SPS7"/>
<dbReference type="STRING" id="29491.GCA_000820065_00832"/>
<dbReference type="KEGG" id="asa:ASA_2887"/>
<dbReference type="eggNOG" id="COG0624">
    <property type="taxonomic scope" value="Bacteria"/>
</dbReference>
<dbReference type="HOGENOM" id="CLU_021802_4_0_6"/>
<dbReference type="UniPathway" id="UPA00034">
    <property type="reaction ID" value="UER00021"/>
</dbReference>
<dbReference type="Proteomes" id="UP000000225">
    <property type="component" value="Chromosome"/>
</dbReference>
<dbReference type="GO" id="GO:0008777">
    <property type="term" value="F:acetylornithine deacetylase activity"/>
    <property type="evidence" value="ECO:0007669"/>
    <property type="project" value="TreeGrafter"/>
</dbReference>
<dbReference type="GO" id="GO:0050897">
    <property type="term" value="F:cobalt ion binding"/>
    <property type="evidence" value="ECO:0007669"/>
    <property type="project" value="UniProtKB-UniRule"/>
</dbReference>
<dbReference type="GO" id="GO:0009014">
    <property type="term" value="F:succinyl-diaminopimelate desuccinylase activity"/>
    <property type="evidence" value="ECO:0007669"/>
    <property type="project" value="UniProtKB-UniRule"/>
</dbReference>
<dbReference type="GO" id="GO:0008270">
    <property type="term" value="F:zinc ion binding"/>
    <property type="evidence" value="ECO:0007669"/>
    <property type="project" value="UniProtKB-UniRule"/>
</dbReference>
<dbReference type="GO" id="GO:0019877">
    <property type="term" value="P:diaminopimelate biosynthetic process"/>
    <property type="evidence" value="ECO:0007669"/>
    <property type="project" value="UniProtKB-UniRule"/>
</dbReference>
<dbReference type="GO" id="GO:0006526">
    <property type="term" value="P:L-arginine biosynthetic process"/>
    <property type="evidence" value="ECO:0007669"/>
    <property type="project" value="TreeGrafter"/>
</dbReference>
<dbReference type="GO" id="GO:0009089">
    <property type="term" value="P:lysine biosynthetic process via diaminopimelate"/>
    <property type="evidence" value="ECO:0007669"/>
    <property type="project" value="UniProtKB-UniRule"/>
</dbReference>
<dbReference type="CDD" id="cd03891">
    <property type="entry name" value="M20_DapE_proteobac"/>
    <property type="match status" value="1"/>
</dbReference>
<dbReference type="FunFam" id="3.30.70.360:FF:000011">
    <property type="entry name" value="Succinyl-diaminopimelate desuccinylase"/>
    <property type="match status" value="1"/>
</dbReference>
<dbReference type="FunFam" id="3.40.630.10:FF:000005">
    <property type="entry name" value="Succinyl-diaminopimelate desuccinylase"/>
    <property type="match status" value="1"/>
</dbReference>
<dbReference type="FunFam" id="3.40.630.10:FF:000010">
    <property type="entry name" value="Succinyl-diaminopimelate desuccinylase"/>
    <property type="match status" value="1"/>
</dbReference>
<dbReference type="Gene3D" id="3.40.630.10">
    <property type="entry name" value="Zn peptidases"/>
    <property type="match status" value="2"/>
</dbReference>
<dbReference type="HAMAP" id="MF_01690">
    <property type="entry name" value="DapE"/>
    <property type="match status" value="1"/>
</dbReference>
<dbReference type="InterPro" id="IPR001261">
    <property type="entry name" value="ArgE/DapE_CS"/>
</dbReference>
<dbReference type="InterPro" id="IPR036264">
    <property type="entry name" value="Bact_exopeptidase_dim_dom"/>
</dbReference>
<dbReference type="InterPro" id="IPR005941">
    <property type="entry name" value="DapE_proteobac"/>
</dbReference>
<dbReference type="InterPro" id="IPR002933">
    <property type="entry name" value="Peptidase_M20"/>
</dbReference>
<dbReference type="InterPro" id="IPR011650">
    <property type="entry name" value="Peptidase_M20_dimer"/>
</dbReference>
<dbReference type="InterPro" id="IPR050072">
    <property type="entry name" value="Peptidase_M20A"/>
</dbReference>
<dbReference type="NCBIfam" id="TIGR01246">
    <property type="entry name" value="dapE_proteo"/>
    <property type="match status" value="1"/>
</dbReference>
<dbReference type="NCBIfam" id="NF009557">
    <property type="entry name" value="PRK13009.1"/>
    <property type="match status" value="1"/>
</dbReference>
<dbReference type="PANTHER" id="PTHR43808">
    <property type="entry name" value="ACETYLORNITHINE DEACETYLASE"/>
    <property type="match status" value="1"/>
</dbReference>
<dbReference type="PANTHER" id="PTHR43808:SF31">
    <property type="entry name" value="N-ACETYL-L-CITRULLINE DEACETYLASE"/>
    <property type="match status" value="1"/>
</dbReference>
<dbReference type="Pfam" id="PF07687">
    <property type="entry name" value="M20_dimer"/>
    <property type="match status" value="1"/>
</dbReference>
<dbReference type="Pfam" id="PF01546">
    <property type="entry name" value="Peptidase_M20"/>
    <property type="match status" value="1"/>
</dbReference>
<dbReference type="SUPFAM" id="SSF55031">
    <property type="entry name" value="Bacterial exopeptidase dimerisation domain"/>
    <property type="match status" value="1"/>
</dbReference>
<dbReference type="SUPFAM" id="SSF53187">
    <property type="entry name" value="Zn-dependent exopeptidases"/>
    <property type="match status" value="1"/>
</dbReference>
<dbReference type="PROSITE" id="PS00759">
    <property type="entry name" value="ARGE_DAPE_CPG2_2"/>
    <property type="match status" value="1"/>
</dbReference>
<accession>A4SPS7</accession>
<evidence type="ECO:0000255" key="1">
    <source>
        <dbReference type="HAMAP-Rule" id="MF_01690"/>
    </source>
</evidence>